<name>Y920_BACC3</name>
<evidence type="ECO:0000255" key="1">
    <source>
        <dbReference type="HAMAP-Rule" id="MF_01526"/>
    </source>
</evidence>
<gene>
    <name type="ordered locus">BCA_0920</name>
</gene>
<sequence length="118" mass="13564">MTKNIHDVAYELQKAIAENDDFKTLKESYAAVQADAASKNLFDEFRTMQLSLQQKMMQGQEITEEDNQQAQEVVVRIQQDAKITKLMETEQRLNVVIGDVNKIIMKPLEELYSAQQQA</sequence>
<reference key="1">
    <citation type="submission" date="2009-02" db="EMBL/GenBank/DDBJ databases">
        <title>Genome sequence of Bacillus cereus 03BB102.</title>
        <authorList>
            <person name="Dodson R.J."/>
            <person name="Jackson P."/>
            <person name="Munk A.C."/>
            <person name="Brettin T."/>
            <person name="Bruce D."/>
            <person name="Detter C."/>
            <person name="Tapia R."/>
            <person name="Han C."/>
            <person name="Sutton G."/>
            <person name="Sims D."/>
        </authorList>
    </citation>
    <scope>NUCLEOTIDE SEQUENCE [LARGE SCALE GENOMIC DNA]</scope>
    <source>
        <strain>03BB102</strain>
    </source>
</reference>
<feature type="chain" id="PRO_1000185138" description="UPF0342 protein BCA_0920">
    <location>
        <begin position="1"/>
        <end position="118"/>
    </location>
</feature>
<dbReference type="EMBL" id="CP001407">
    <property type="protein sequence ID" value="ACO27688.1"/>
    <property type="molecule type" value="Genomic_DNA"/>
</dbReference>
<dbReference type="RefSeq" id="WP_000164606.1">
    <property type="nucleotide sequence ID" value="NZ_CP009318.1"/>
</dbReference>
<dbReference type="SMR" id="C1EZN7"/>
<dbReference type="KEGG" id="bcx:BCA_0920"/>
<dbReference type="PATRIC" id="fig|572264.18.peg.862"/>
<dbReference type="Proteomes" id="UP000002210">
    <property type="component" value="Chromosome"/>
</dbReference>
<dbReference type="Gene3D" id="1.20.1500.10">
    <property type="entry name" value="YheA/YmcA-like"/>
    <property type="match status" value="1"/>
</dbReference>
<dbReference type="HAMAP" id="MF_01526">
    <property type="entry name" value="UPF0342"/>
    <property type="match status" value="1"/>
</dbReference>
<dbReference type="InterPro" id="IPR010368">
    <property type="entry name" value="Com_YlbF"/>
</dbReference>
<dbReference type="InterPro" id="IPR023378">
    <property type="entry name" value="YheA/YmcA-like_dom_sf"/>
</dbReference>
<dbReference type="NCBIfam" id="NF010211">
    <property type="entry name" value="PRK13676.1-4"/>
    <property type="match status" value="1"/>
</dbReference>
<dbReference type="Pfam" id="PF06133">
    <property type="entry name" value="Com_YlbF"/>
    <property type="match status" value="1"/>
</dbReference>
<dbReference type="SUPFAM" id="SSF158622">
    <property type="entry name" value="YheA/YmcA-like"/>
    <property type="match status" value="1"/>
</dbReference>
<protein>
    <recommendedName>
        <fullName evidence="1">UPF0342 protein BCA_0920</fullName>
    </recommendedName>
</protein>
<accession>C1EZN7</accession>
<organism>
    <name type="scientific">Bacillus cereus (strain 03BB102)</name>
    <dbReference type="NCBI Taxonomy" id="572264"/>
    <lineage>
        <taxon>Bacteria</taxon>
        <taxon>Bacillati</taxon>
        <taxon>Bacillota</taxon>
        <taxon>Bacilli</taxon>
        <taxon>Bacillales</taxon>
        <taxon>Bacillaceae</taxon>
        <taxon>Bacillus</taxon>
        <taxon>Bacillus cereus group</taxon>
    </lineage>
</organism>
<comment type="similarity">
    <text evidence="1">Belongs to the UPF0342 family.</text>
</comment>
<proteinExistence type="inferred from homology"/>